<protein>
    <recommendedName>
        <fullName evidence="1">Small ribosomal subunit protein eS28</fullName>
    </recommendedName>
    <alternativeName>
        <fullName>30S ribosomal protein S28e</fullName>
    </alternativeName>
</protein>
<sequence length="69" mass="7458">MPNEATPAEVVEIIGRTGMTGEATTVKVRVLAGRDQGRIIARNVLGPVRVGDILMLMETAREAKKLSIR</sequence>
<organism>
    <name type="scientific">Thermoplasma acidophilum (strain ATCC 25905 / DSM 1728 / JCM 9062 / NBRC 15155 / AMRC-C165)</name>
    <dbReference type="NCBI Taxonomy" id="273075"/>
    <lineage>
        <taxon>Archaea</taxon>
        <taxon>Methanobacteriati</taxon>
        <taxon>Thermoplasmatota</taxon>
        <taxon>Thermoplasmata</taxon>
        <taxon>Thermoplasmatales</taxon>
        <taxon>Thermoplasmataceae</taxon>
        <taxon>Thermoplasma</taxon>
    </lineage>
</organism>
<gene>
    <name type="primary">rps28e</name>
    <name type="ordered locus">Ta1115</name>
</gene>
<keyword id="KW-1185">Reference proteome</keyword>
<keyword id="KW-0687">Ribonucleoprotein</keyword>
<keyword id="KW-0689">Ribosomal protein</keyword>
<accession>P57711</accession>
<accession>Q9HJ57</accession>
<comment type="similarity">
    <text evidence="1">Belongs to the eukaryotic ribosomal protein eS28 family.</text>
</comment>
<evidence type="ECO:0000305" key="1"/>
<feature type="chain" id="PRO_0000136863" description="Small ribosomal subunit protein eS28">
    <location>
        <begin position="1"/>
        <end position="69"/>
    </location>
</feature>
<dbReference type="EMBL" id="AL445066">
    <property type="protein sequence ID" value="CAC12242.1"/>
    <property type="molecule type" value="Genomic_DNA"/>
</dbReference>
<dbReference type="RefSeq" id="WP_010901525.1">
    <property type="nucleotide sequence ID" value="NC_002578.1"/>
</dbReference>
<dbReference type="SMR" id="P57711"/>
<dbReference type="FunCoup" id="P57711">
    <property type="interactions" value="153"/>
</dbReference>
<dbReference type="STRING" id="273075.gene:9572336"/>
<dbReference type="PaxDb" id="273075-Ta1115"/>
<dbReference type="EnsemblBacteria" id="CAC12242">
    <property type="protein sequence ID" value="CAC12242"/>
    <property type="gene ID" value="CAC12242"/>
</dbReference>
<dbReference type="KEGG" id="tac:Ta1115"/>
<dbReference type="eggNOG" id="arCOG04314">
    <property type="taxonomic scope" value="Archaea"/>
</dbReference>
<dbReference type="HOGENOM" id="CLU_178987_2_1_2"/>
<dbReference type="InParanoid" id="P57711"/>
<dbReference type="OrthoDB" id="7620at2157"/>
<dbReference type="Proteomes" id="UP000001024">
    <property type="component" value="Chromosome"/>
</dbReference>
<dbReference type="GO" id="GO:0022627">
    <property type="term" value="C:cytosolic small ribosomal subunit"/>
    <property type="evidence" value="ECO:0007669"/>
    <property type="project" value="TreeGrafter"/>
</dbReference>
<dbReference type="GO" id="GO:0003735">
    <property type="term" value="F:structural constituent of ribosome"/>
    <property type="evidence" value="ECO:0007669"/>
    <property type="project" value="InterPro"/>
</dbReference>
<dbReference type="GO" id="GO:0030490">
    <property type="term" value="P:maturation of SSU-rRNA"/>
    <property type="evidence" value="ECO:0007669"/>
    <property type="project" value="TreeGrafter"/>
</dbReference>
<dbReference type="GO" id="GO:0000028">
    <property type="term" value="P:ribosomal small subunit assembly"/>
    <property type="evidence" value="ECO:0007669"/>
    <property type="project" value="TreeGrafter"/>
</dbReference>
<dbReference type="GO" id="GO:0006412">
    <property type="term" value="P:translation"/>
    <property type="evidence" value="ECO:0007669"/>
    <property type="project" value="UniProtKB-UniRule"/>
</dbReference>
<dbReference type="CDD" id="cd04457">
    <property type="entry name" value="S1_S28E"/>
    <property type="match status" value="1"/>
</dbReference>
<dbReference type="FunFam" id="2.40.50.140:FF:000145">
    <property type="entry name" value="30S ribosomal protein S28e"/>
    <property type="match status" value="1"/>
</dbReference>
<dbReference type="Gene3D" id="2.40.50.140">
    <property type="entry name" value="Nucleic acid-binding proteins"/>
    <property type="match status" value="1"/>
</dbReference>
<dbReference type="HAMAP" id="MF_00292">
    <property type="entry name" value="Ribosomal_eS28"/>
    <property type="match status" value="1"/>
</dbReference>
<dbReference type="InterPro" id="IPR012340">
    <property type="entry name" value="NA-bd_OB-fold"/>
</dbReference>
<dbReference type="InterPro" id="IPR000289">
    <property type="entry name" value="Ribosomal_eS28"/>
</dbReference>
<dbReference type="InterPro" id="IPR028626">
    <property type="entry name" value="Ribosomal_eS28_CS"/>
</dbReference>
<dbReference type="NCBIfam" id="NF003080">
    <property type="entry name" value="PRK04007.1"/>
    <property type="match status" value="1"/>
</dbReference>
<dbReference type="PANTHER" id="PTHR10769">
    <property type="entry name" value="40S RIBOSOMAL PROTEIN S28"/>
    <property type="match status" value="1"/>
</dbReference>
<dbReference type="PANTHER" id="PTHR10769:SF3">
    <property type="entry name" value="SMALL RIBOSOMAL SUBUNIT PROTEIN ES28"/>
    <property type="match status" value="1"/>
</dbReference>
<dbReference type="Pfam" id="PF01200">
    <property type="entry name" value="Ribosomal_S28e"/>
    <property type="match status" value="1"/>
</dbReference>
<dbReference type="SUPFAM" id="SSF50249">
    <property type="entry name" value="Nucleic acid-binding proteins"/>
    <property type="match status" value="1"/>
</dbReference>
<dbReference type="PROSITE" id="PS00961">
    <property type="entry name" value="RIBOSOMAL_S28E"/>
    <property type="match status" value="1"/>
</dbReference>
<name>RS28_THEAC</name>
<proteinExistence type="inferred from homology"/>
<reference key="1">
    <citation type="journal article" date="2000" name="Nature">
        <title>The genome sequence of the thermoacidophilic scavenger Thermoplasma acidophilum.</title>
        <authorList>
            <person name="Ruepp A."/>
            <person name="Graml W."/>
            <person name="Santos-Martinez M.-L."/>
            <person name="Koretke K.K."/>
            <person name="Volker C."/>
            <person name="Mewes H.-W."/>
            <person name="Frishman D."/>
            <person name="Stocker S."/>
            <person name="Lupas A.N."/>
            <person name="Baumeister W."/>
        </authorList>
    </citation>
    <scope>NUCLEOTIDE SEQUENCE [LARGE SCALE GENOMIC DNA]</scope>
    <source>
        <strain>ATCC 25905 / DSM 1728 / JCM 9062 / NBRC 15155 / AMRC-C165</strain>
    </source>
</reference>